<dbReference type="EC" id="1.1.1.22"/>
<dbReference type="EMBL" id="U78086">
    <property type="protein sequence ID" value="AAC45829.1"/>
    <property type="molecule type" value="Genomic_DNA"/>
</dbReference>
<dbReference type="RefSeq" id="WP_000704798.1">
    <property type="nucleotide sequence ID" value="NZ_WVVS01000002.1"/>
</dbReference>
<dbReference type="SMR" id="O33952"/>
<dbReference type="STRING" id="585034.ECIAI1_2108"/>
<dbReference type="UniPathway" id="UPA00030"/>
<dbReference type="UniPathway" id="UPA00038">
    <property type="reaction ID" value="UER00491"/>
</dbReference>
<dbReference type="GO" id="GO:0051287">
    <property type="term" value="F:NAD binding"/>
    <property type="evidence" value="ECO:0000250"/>
    <property type="project" value="UniProtKB"/>
</dbReference>
<dbReference type="GO" id="GO:0003979">
    <property type="term" value="F:UDP-glucose 6-dehydrogenase activity"/>
    <property type="evidence" value="ECO:0000250"/>
    <property type="project" value="UniProtKB"/>
</dbReference>
<dbReference type="GO" id="GO:0009103">
    <property type="term" value="P:lipopolysaccharide biosynthetic process"/>
    <property type="evidence" value="ECO:0007669"/>
    <property type="project" value="UniProtKB-UniPathway"/>
</dbReference>
<dbReference type="GO" id="GO:0006065">
    <property type="term" value="P:UDP-glucuronate biosynthetic process"/>
    <property type="evidence" value="ECO:0007669"/>
    <property type="project" value="UniProtKB-UniPathway"/>
</dbReference>
<dbReference type="FunFam" id="1.10.1040.10:FF:000026">
    <property type="entry name" value="UDP-glucose 6-dehydrogenase"/>
    <property type="match status" value="1"/>
</dbReference>
<dbReference type="FunFam" id="3.40.50.720:FF:000297">
    <property type="entry name" value="UDP-glucose 6-dehydrogenase"/>
    <property type="match status" value="1"/>
</dbReference>
<dbReference type="FunFam" id="3.40.50.720:FF:000400">
    <property type="entry name" value="UDP-glucose 6-dehydrogenase"/>
    <property type="match status" value="1"/>
</dbReference>
<dbReference type="Gene3D" id="1.10.1040.10">
    <property type="entry name" value="N-(1-d-carboxylethyl)-l-norvaline Dehydrogenase, domain 2"/>
    <property type="match status" value="1"/>
</dbReference>
<dbReference type="Gene3D" id="3.40.50.720">
    <property type="entry name" value="NAD(P)-binding Rossmann-like Domain"/>
    <property type="match status" value="2"/>
</dbReference>
<dbReference type="InterPro" id="IPR008927">
    <property type="entry name" value="6-PGluconate_DH-like_C_sf"/>
</dbReference>
<dbReference type="InterPro" id="IPR013328">
    <property type="entry name" value="6PGD_dom2"/>
</dbReference>
<dbReference type="InterPro" id="IPR036291">
    <property type="entry name" value="NAD(P)-bd_dom_sf"/>
</dbReference>
<dbReference type="InterPro" id="IPR017476">
    <property type="entry name" value="UDP-Glc/GDP-Man"/>
</dbReference>
<dbReference type="InterPro" id="IPR014027">
    <property type="entry name" value="UDP-Glc/GDP-Man_DH_C"/>
</dbReference>
<dbReference type="InterPro" id="IPR036220">
    <property type="entry name" value="UDP-Glc/GDP-Man_DH_C_sf"/>
</dbReference>
<dbReference type="InterPro" id="IPR014026">
    <property type="entry name" value="UDP-Glc/GDP-Man_DH_dimer"/>
</dbReference>
<dbReference type="InterPro" id="IPR001732">
    <property type="entry name" value="UDP-Glc/GDP-Man_DH_N"/>
</dbReference>
<dbReference type="InterPro" id="IPR028357">
    <property type="entry name" value="UDPglc_DH_bac"/>
</dbReference>
<dbReference type="NCBIfam" id="TIGR03026">
    <property type="entry name" value="NDP-sugDHase"/>
    <property type="match status" value="1"/>
</dbReference>
<dbReference type="NCBIfam" id="NF011631">
    <property type="entry name" value="PRK15057.1"/>
    <property type="match status" value="1"/>
</dbReference>
<dbReference type="PANTHER" id="PTHR43750:SF2">
    <property type="entry name" value="UDP-GLUCOSE 6-DEHYDROGENASE"/>
    <property type="match status" value="1"/>
</dbReference>
<dbReference type="PANTHER" id="PTHR43750">
    <property type="entry name" value="UDP-GLUCOSE 6-DEHYDROGENASE TUAD"/>
    <property type="match status" value="1"/>
</dbReference>
<dbReference type="Pfam" id="PF00984">
    <property type="entry name" value="UDPG_MGDP_dh"/>
    <property type="match status" value="1"/>
</dbReference>
<dbReference type="Pfam" id="PF03720">
    <property type="entry name" value="UDPG_MGDP_dh_C"/>
    <property type="match status" value="1"/>
</dbReference>
<dbReference type="Pfam" id="PF03721">
    <property type="entry name" value="UDPG_MGDP_dh_N"/>
    <property type="match status" value="1"/>
</dbReference>
<dbReference type="PIRSF" id="PIRSF500134">
    <property type="entry name" value="UDPglc_DH_bac"/>
    <property type="match status" value="1"/>
</dbReference>
<dbReference type="PIRSF" id="PIRSF000124">
    <property type="entry name" value="UDPglc_GDPman_dh"/>
    <property type="match status" value="1"/>
</dbReference>
<dbReference type="SMART" id="SM00984">
    <property type="entry name" value="UDPG_MGDP_dh_C"/>
    <property type="match status" value="1"/>
</dbReference>
<dbReference type="SUPFAM" id="SSF48179">
    <property type="entry name" value="6-phosphogluconate dehydrogenase C-terminal domain-like"/>
    <property type="match status" value="1"/>
</dbReference>
<dbReference type="SUPFAM" id="SSF51735">
    <property type="entry name" value="NAD(P)-binding Rossmann-fold domains"/>
    <property type="match status" value="1"/>
</dbReference>
<dbReference type="SUPFAM" id="SSF52413">
    <property type="entry name" value="UDP-glucose/GDP-mannose dehydrogenase C-terminal domain"/>
    <property type="match status" value="1"/>
</dbReference>
<reference key="1">
    <citation type="journal article" date="1997" name="Mol. Microbiol.">
        <title>Molecular and functional analysis of genes required for expression of group IB K antigens in Escherichia coli: characterization of the his-region containing gene clusters for multiple cell-surface polysaccharides.</title>
        <authorList>
            <person name="Amor P.A."/>
            <person name="Whitfield C."/>
        </authorList>
    </citation>
    <scope>NUCLEOTIDE SEQUENCE [GENOMIC DNA]</scope>
    <source>
        <strain>O8:K40 / 2775</strain>
    </source>
</reference>
<feature type="chain" id="PRO_0000074046" description="UDP-glucose 6-dehydrogenase">
    <location>
        <begin position="1"/>
        <end position="388"/>
    </location>
</feature>
<feature type="active site" description="Nucleophile" evidence="2">
    <location>
        <position position="253"/>
    </location>
</feature>
<feature type="binding site" evidence="3">
    <location>
        <begin position="2"/>
        <end position="19"/>
    </location>
    <ligand>
        <name>NAD(+)</name>
        <dbReference type="ChEBI" id="CHEBI:57540"/>
    </ligand>
</feature>
<feature type="binding site" evidence="2">
    <location>
        <position position="11"/>
    </location>
    <ligand>
        <name>NAD(+)</name>
        <dbReference type="ChEBI" id="CHEBI:57540"/>
    </ligand>
</feature>
<feature type="binding site" evidence="2">
    <location>
        <position position="29"/>
    </location>
    <ligand>
        <name>NAD(+)</name>
        <dbReference type="ChEBI" id="CHEBI:57540"/>
    </ligand>
</feature>
<feature type="binding site" evidence="2">
    <location>
        <position position="34"/>
    </location>
    <ligand>
        <name>NAD(+)</name>
        <dbReference type="ChEBI" id="CHEBI:57540"/>
    </ligand>
</feature>
<feature type="binding site" evidence="2">
    <location>
        <position position="83"/>
    </location>
    <ligand>
        <name>NAD(+)</name>
        <dbReference type="ChEBI" id="CHEBI:57540"/>
    </ligand>
</feature>
<feature type="binding site" evidence="2">
    <location>
        <position position="118"/>
    </location>
    <ligand>
        <name>NAD(+)</name>
        <dbReference type="ChEBI" id="CHEBI:57540"/>
    </ligand>
</feature>
<feature type="binding site" evidence="2">
    <location>
        <begin position="141"/>
        <end position="145"/>
    </location>
    <ligand>
        <name>substrate</name>
    </ligand>
</feature>
<feature type="binding site" evidence="2">
    <location>
        <position position="145"/>
    </location>
    <ligand>
        <name>NAD(+)</name>
        <dbReference type="ChEBI" id="CHEBI:57540"/>
    </ligand>
</feature>
<feature type="binding site" evidence="2">
    <location>
        <position position="197"/>
    </location>
    <ligand>
        <name>substrate</name>
    </ligand>
</feature>
<feature type="binding site" evidence="2">
    <location>
        <position position="201"/>
    </location>
    <ligand>
        <name>substrate</name>
    </ligand>
</feature>
<feature type="binding site" evidence="2">
    <location>
        <begin position="242"/>
        <end position="246"/>
    </location>
    <ligand>
        <name>substrate</name>
    </ligand>
</feature>
<feature type="binding site" evidence="2">
    <location>
        <position position="250"/>
    </location>
    <ligand>
        <name>substrate</name>
    </ligand>
</feature>
<feature type="binding site" evidence="2">
    <location>
        <position position="252"/>
    </location>
    <ligand>
        <name>NAD(+)</name>
        <dbReference type="ChEBI" id="CHEBI:57540"/>
    </ligand>
</feature>
<feature type="binding site" evidence="2">
    <location>
        <position position="256"/>
    </location>
    <ligand>
        <name>NAD(+)</name>
        <dbReference type="ChEBI" id="CHEBI:57540"/>
    </ligand>
</feature>
<feature type="binding site" evidence="2">
    <location>
        <position position="307"/>
    </location>
    <ligand>
        <name>substrate</name>
    </ligand>
</feature>
<feature type="binding site" evidence="2">
    <location>
        <position position="314"/>
    </location>
    <ligand>
        <name>NAD(+)</name>
        <dbReference type="ChEBI" id="CHEBI:57540"/>
    </ligand>
</feature>
<accession>O33952</accession>
<gene>
    <name type="primary">ugd</name>
</gene>
<organism>
    <name type="scientific">Escherichia coli</name>
    <dbReference type="NCBI Taxonomy" id="562"/>
    <lineage>
        <taxon>Bacteria</taxon>
        <taxon>Pseudomonadati</taxon>
        <taxon>Pseudomonadota</taxon>
        <taxon>Gammaproteobacteria</taxon>
        <taxon>Enterobacterales</taxon>
        <taxon>Enterobacteriaceae</taxon>
        <taxon>Escherichia</taxon>
    </lineage>
</organism>
<keyword id="KW-0520">NAD</keyword>
<keyword id="KW-0560">Oxidoreductase</keyword>
<keyword id="KW-0597">Phosphoprotein</keyword>
<sequence length="388" mass="43549">MKITISGTGYVGLSNGILIAQNHEVVALDIVQAKVDMLNKKQSPIVDKEIEEYLATKDLNFRATTDKYDAYKNADYVIIATPTDYDPKTNYFNTSSVEAVIRDVTEINPNAVMVIKSTIPVGFTKSIKERLGIDNLIFSPEFLREGKALYDNLHPSRIVIGERSERAERFAALLQEGAIKQNIPTLFTDSTEAEAIKLFANTYLAMRVAYFNELDSYAESLGLNTRQIIEGVCLDPRIGNHYNNPSFGYGGYCLPKDTKQLLANYQSVPNNLISAIVDANRTRKDFIADAILSRKPQVVGIYRLIMKSGSDNFRASSIQGIMKRIKAKGVEVIIYEPVMKEDSFFNSRLERDLATFKQQADVIISNRMAEELKDVADKVYTRDLFGSD</sequence>
<name>UDG8_ECOLX</name>
<proteinExistence type="inferred from homology"/>
<protein>
    <recommendedName>
        <fullName>UDP-glucose 6-dehydrogenase</fullName>
        <shortName>UDP-Glc dehydrogenase</shortName>
        <shortName>UDP-GlcDH</shortName>
        <shortName>UDPGDH</shortName>
        <ecNumber>1.1.1.22</ecNumber>
    </recommendedName>
</protein>
<evidence type="ECO:0000250" key="1"/>
<evidence type="ECO:0000250" key="2">
    <source>
        <dbReference type="UniProtKB" id="Q0P8H3"/>
    </source>
</evidence>
<evidence type="ECO:0000255" key="3"/>
<evidence type="ECO:0000305" key="4"/>
<comment type="catalytic activity">
    <reaction>
        <text>UDP-alpha-D-glucose + 2 NAD(+) + H2O = UDP-alpha-D-glucuronate + 2 NADH + 3 H(+)</text>
        <dbReference type="Rhea" id="RHEA:23596"/>
        <dbReference type="ChEBI" id="CHEBI:15377"/>
        <dbReference type="ChEBI" id="CHEBI:15378"/>
        <dbReference type="ChEBI" id="CHEBI:57540"/>
        <dbReference type="ChEBI" id="CHEBI:57945"/>
        <dbReference type="ChEBI" id="CHEBI:58052"/>
        <dbReference type="ChEBI" id="CHEBI:58885"/>
        <dbReference type="EC" id="1.1.1.22"/>
    </reaction>
</comment>
<comment type="pathway">
    <text>Nucleotide-sugar biosynthesis; UDP-alpha-D-glucuronate biosynthesis; UDP-alpha-D-glucuronate from UDP-alpha-D-glucose: step 1/1.</text>
</comment>
<comment type="pathway">
    <text>Bacterial outer membrane biogenesis; lipopolysaccharide biosynthesis.</text>
</comment>
<comment type="PTM">
    <text evidence="1">Phosphorylated on a tyrosine residue. It results in a significant increase of the dehydrogenase activity (By similarity).</text>
</comment>
<comment type="similarity">
    <text evidence="4">Belongs to the UDP-glucose/GDP-mannose dehydrogenase family.</text>
</comment>